<keyword id="KW-0084">Basement membrane</keyword>
<keyword id="KW-0106">Calcium</keyword>
<keyword id="KW-0130">Cell adhesion</keyword>
<keyword id="KW-1015">Disulfide bond</keyword>
<keyword id="KW-0245">EGF-like domain</keyword>
<keyword id="KW-0272">Extracellular matrix</keyword>
<keyword id="KW-0325">Glycoprotein</keyword>
<keyword id="KW-1185">Reference proteome</keyword>
<keyword id="KW-0677">Repeat</keyword>
<keyword id="KW-0964">Secreted</keyword>
<keyword id="KW-0732">Signal</keyword>
<evidence type="ECO:0000255" key="1"/>
<evidence type="ECO:0000255" key="2">
    <source>
        <dbReference type="PROSITE-ProRule" id="PRU00076"/>
    </source>
</evidence>
<evidence type="ECO:0000255" key="3">
    <source>
        <dbReference type="PROSITE-ProRule" id="PRU00348"/>
    </source>
</evidence>
<evidence type="ECO:0000255" key="4">
    <source>
        <dbReference type="PROSITE-ProRule" id="PRU00461"/>
    </source>
</evidence>
<evidence type="ECO:0000255" key="5">
    <source>
        <dbReference type="PROSITE-ProRule" id="PRU00498"/>
    </source>
</evidence>
<evidence type="ECO:0000255" key="6">
    <source>
        <dbReference type="PROSITE-ProRule" id="PRU00570"/>
    </source>
</evidence>
<evidence type="ECO:0000256" key="7">
    <source>
        <dbReference type="SAM" id="MobiDB-lite"/>
    </source>
</evidence>
<evidence type="ECO:0000269" key="8">
    <source>
    </source>
</evidence>
<evidence type="ECO:0000269" key="9">
    <source>
    </source>
</evidence>
<evidence type="ECO:0000303" key="10">
    <source>
    </source>
</evidence>
<evidence type="ECO:0000305" key="11"/>
<evidence type="ECO:0000312" key="12">
    <source>
        <dbReference type="EMBL" id="ABX00771.1"/>
    </source>
</evidence>
<evidence type="ECO:0000312" key="13">
    <source>
        <dbReference type="EMBL" id="ACK77669.1"/>
    </source>
</evidence>
<evidence type="ECO:0000312" key="14">
    <source>
        <dbReference type="FlyBase" id="FBgn0026403"/>
    </source>
</evidence>
<evidence type="ECO:0000312" key="15">
    <source>
        <dbReference type="Proteomes" id="UP000000803"/>
    </source>
</evidence>
<proteinExistence type="evidence at protein level"/>
<sequence length="1350" mass="149081">MPTFGSKLLACLLLSSVILVSGQFEHYLDSLRASELYEFEDGSLGSIHLLPKGDSETIVLQLEQPIHFYGEQYEQLYINTNGILTFNSEFPEYLNQPFPLEYASIAAFYSNVDTSFSDEGTSISLFESKEQSILDRASSLVRYAFSSQSEFEARQVIVATWRNVGYFDSKTDRLNTFQVALIANEQSTFVQFIYPDGGLNWLQGETAGLGLPDIRAQAGFVAEDGRFYTLNGSGSENARFLSESTNLGVPGVWLFEVAPIENEQNVRSPDNAESLTESPALALSCQAHAHQCHEKAECHDKAEGYCCVCGSGFYGNGKSCLANDQPIRVTGTLTGELNKQPVSEEAKLQSYVVTSEGRTYTTINPLTPELGAQLRLVLPLLTTVPWLFAKSVGGVANGYQLTGGVYTHVSRLQFDSGENLHVNQTFEGLNYWDQLSVKIEIYGEVPAVAADAVLILPDYVEEYTFERPGELKSVQVLNINITEEQRVLGLQVEQRILYRSCLRDDEADPSATKVLQKISKVALDYVERDQALRIGAMSKVGVTPESNACNDGTADCVENSVCVPYEDTYRCDCYHGFAAQLDERGVEVCLDIDECATGSHVCDENAVCDNTEGGFNCYCTEGFEGNGYRCLSNSTADNIEYPPAVEGQAEPTSEPSPNPSPYPDQGQDQEREREDDQYPQPNPYPYPEEQIPQHPDECYRCSKDADCYQGRCTCHEGFDGDGYTCTNICGHGEVWENGRCEPLLLERHDVDPLCDALGECRCPYGYELSEDSQRCTYVQEFDGERNADLIPCDVDENCHINATCNWYGQELRHICTCQPGFRGDGYNCDPISDDSCAIRPDICDVHADCVYEEHLGKSECQCQAGYTGNGFNCQLAAECQSAEHCGENAFCDDGVCRCQADFERDVSDRCVPAGRCGSVFCGSNAICKWDSAEGVQYCDCLDGYQGDALTGCTSKPLSCHVLNNCGIHATCEPTEDPANYECQCIAGFKGDGYVCIEEQNCLNNPTLCDMNAQCRSTNSGLVCVCNQGFFGNGSLCQERQHQDSDFLIVSQGVMIARVPLNGRNVRPISVAQMAIGLDKDCVEGRVYWGDISTKKIVSTKYDGTDLRPFITTDIESPEGIAIDVISRRLYWADSAKDTIEVASLDDPSLRAVIINKQLVNPRGIAVDPYREKLFWSDWDRESPKIEMSNLDGTGRELLLGKDDVTLPNSLVVLENSGEVCYADAGTKKVECIEPQNRQIRTISNELSYPFGITFTHDQFYWTDWTTKKVEIVDSLGARQTPIQPPFFGSHKMYGMTVVEQHCPQYQSPCQISNGGCTDSRLCLVNRQAPSGKSCKCTSASTGCTVLAPGY</sequence>
<organism evidence="15">
    <name type="scientific">Drosophila melanogaster</name>
    <name type="common">Fruit fly</name>
    <dbReference type="NCBI Taxonomy" id="7227"/>
    <lineage>
        <taxon>Eukaryota</taxon>
        <taxon>Metazoa</taxon>
        <taxon>Ecdysozoa</taxon>
        <taxon>Arthropoda</taxon>
        <taxon>Hexapoda</taxon>
        <taxon>Insecta</taxon>
        <taxon>Pterygota</taxon>
        <taxon>Neoptera</taxon>
        <taxon>Endopterygota</taxon>
        <taxon>Diptera</taxon>
        <taxon>Brachycera</taxon>
        <taxon>Muscomorpha</taxon>
        <taxon>Ephydroidea</taxon>
        <taxon>Drosophilidae</taxon>
        <taxon>Drosophila</taxon>
        <taxon>Sophophora</taxon>
    </lineage>
</organism>
<accession>A1Z877</accession>
<accession>A1Z876</accession>
<accession>B7FNR1</accession>
<reference evidence="15" key="1">
    <citation type="journal article" date="2000" name="Science">
        <title>The genome sequence of Drosophila melanogaster.</title>
        <authorList>
            <person name="Adams M.D."/>
            <person name="Celniker S.E."/>
            <person name="Holt R.A."/>
            <person name="Evans C.A."/>
            <person name="Gocayne J.D."/>
            <person name="Amanatides P.G."/>
            <person name="Scherer S.E."/>
            <person name="Li P.W."/>
            <person name="Hoskins R.A."/>
            <person name="Galle R.F."/>
            <person name="George R.A."/>
            <person name="Lewis S.E."/>
            <person name="Richards S."/>
            <person name="Ashburner M."/>
            <person name="Henderson S.N."/>
            <person name="Sutton G.G."/>
            <person name="Wortman J.R."/>
            <person name="Yandell M.D."/>
            <person name="Zhang Q."/>
            <person name="Chen L.X."/>
            <person name="Brandon R.C."/>
            <person name="Rogers Y.-H.C."/>
            <person name="Blazej R.G."/>
            <person name="Champe M."/>
            <person name="Pfeiffer B.D."/>
            <person name="Wan K.H."/>
            <person name="Doyle C."/>
            <person name="Baxter E.G."/>
            <person name="Helt G."/>
            <person name="Nelson C.R."/>
            <person name="Miklos G.L.G."/>
            <person name="Abril J.F."/>
            <person name="Agbayani A."/>
            <person name="An H.-J."/>
            <person name="Andrews-Pfannkoch C."/>
            <person name="Baldwin D."/>
            <person name="Ballew R.M."/>
            <person name="Basu A."/>
            <person name="Baxendale J."/>
            <person name="Bayraktaroglu L."/>
            <person name="Beasley E.M."/>
            <person name="Beeson K.Y."/>
            <person name="Benos P.V."/>
            <person name="Berman B.P."/>
            <person name="Bhandari D."/>
            <person name="Bolshakov S."/>
            <person name="Borkova D."/>
            <person name="Botchan M.R."/>
            <person name="Bouck J."/>
            <person name="Brokstein P."/>
            <person name="Brottier P."/>
            <person name="Burtis K.C."/>
            <person name="Busam D.A."/>
            <person name="Butler H."/>
            <person name="Cadieu E."/>
            <person name="Center A."/>
            <person name="Chandra I."/>
            <person name="Cherry J.M."/>
            <person name="Cawley S."/>
            <person name="Dahlke C."/>
            <person name="Davenport L.B."/>
            <person name="Davies P."/>
            <person name="de Pablos B."/>
            <person name="Delcher A."/>
            <person name="Deng Z."/>
            <person name="Mays A.D."/>
            <person name="Dew I."/>
            <person name="Dietz S.M."/>
            <person name="Dodson K."/>
            <person name="Doup L.E."/>
            <person name="Downes M."/>
            <person name="Dugan-Rocha S."/>
            <person name="Dunkov B.C."/>
            <person name="Dunn P."/>
            <person name="Durbin K.J."/>
            <person name="Evangelista C.C."/>
            <person name="Ferraz C."/>
            <person name="Ferriera S."/>
            <person name="Fleischmann W."/>
            <person name="Fosler C."/>
            <person name="Gabrielian A.E."/>
            <person name="Garg N.S."/>
            <person name="Gelbart W.M."/>
            <person name="Glasser K."/>
            <person name="Glodek A."/>
            <person name="Gong F."/>
            <person name="Gorrell J.H."/>
            <person name="Gu Z."/>
            <person name="Guan P."/>
            <person name="Harris M."/>
            <person name="Harris N.L."/>
            <person name="Harvey D.A."/>
            <person name="Heiman T.J."/>
            <person name="Hernandez J.R."/>
            <person name="Houck J."/>
            <person name="Hostin D."/>
            <person name="Houston K.A."/>
            <person name="Howland T.J."/>
            <person name="Wei M.-H."/>
            <person name="Ibegwam C."/>
            <person name="Jalali M."/>
            <person name="Kalush F."/>
            <person name="Karpen G.H."/>
            <person name="Ke Z."/>
            <person name="Kennison J.A."/>
            <person name="Ketchum K.A."/>
            <person name="Kimmel B.E."/>
            <person name="Kodira C.D."/>
            <person name="Kraft C.L."/>
            <person name="Kravitz S."/>
            <person name="Kulp D."/>
            <person name="Lai Z."/>
            <person name="Lasko P."/>
            <person name="Lei Y."/>
            <person name="Levitsky A.A."/>
            <person name="Li J.H."/>
            <person name="Li Z."/>
            <person name="Liang Y."/>
            <person name="Lin X."/>
            <person name="Liu X."/>
            <person name="Mattei B."/>
            <person name="McIntosh T.C."/>
            <person name="McLeod M.P."/>
            <person name="McPherson D."/>
            <person name="Merkulov G."/>
            <person name="Milshina N.V."/>
            <person name="Mobarry C."/>
            <person name="Morris J."/>
            <person name="Moshrefi A."/>
            <person name="Mount S.M."/>
            <person name="Moy M."/>
            <person name="Murphy B."/>
            <person name="Murphy L."/>
            <person name="Muzny D.M."/>
            <person name="Nelson D.L."/>
            <person name="Nelson D.R."/>
            <person name="Nelson K.A."/>
            <person name="Nixon K."/>
            <person name="Nusskern D.R."/>
            <person name="Pacleb J.M."/>
            <person name="Palazzolo M."/>
            <person name="Pittman G.S."/>
            <person name="Pan S."/>
            <person name="Pollard J."/>
            <person name="Puri V."/>
            <person name="Reese M.G."/>
            <person name="Reinert K."/>
            <person name="Remington K."/>
            <person name="Saunders R.D.C."/>
            <person name="Scheeler F."/>
            <person name="Shen H."/>
            <person name="Shue B.C."/>
            <person name="Siden-Kiamos I."/>
            <person name="Simpson M."/>
            <person name="Skupski M.P."/>
            <person name="Smith T.J."/>
            <person name="Spier E."/>
            <person name="Spradling A.C."/>
            <person name="Stapleton M."/>
            <person name="Strong R."/>
            <person name="Sun E."/>
            <person name="Svirskas R."/>
            <person name="Tector C."/>
            <person name="Turner R."/>
            <person name="Venter E."/>
            <person name="Wang A.H."/>
            <person name="Wang X."/>
            <person name="Wang Z.-Y."/>
            <person name="Wassarman D.A."/>
            <person name="Weinstock G.M."/>
            <person name="Weissenbach J."/>
            <person name="Williams S.M."/>
            <person name="Woodage T."/>
            <person name="Worley K.C."/>
            <person name="Wu D."/>
            <person name="Yang S."/>
            <person name="Yao Q.A."/>
            <person name="Ye J."/>
            <person name="Yeh R.-F."/>
            <person name="Zaveri J.S."/>
            <person name="Zhan M."/>
            <person name="Zhang G."/>
            <person name="Zhao Q."/>
            <person name="Zheng L."/>
            <person name="Zheng X.H."/>
            <person name="Zhong F.N."/>
            <person name="Zhong W."/>
            <person name="Zhou X."/>
            <person name="Zhu S.C."/>
            <person name="Zhu X."/>
            <person name="Smith H.O."/>
            <person name="Gibbs R.A."/>
            <person name="Myers E.W."/>
            <person name="Rubin G.M."/>
            <person name="Venter J.C."/>
        </authorList>
    </citation>
    <scope>NUCLEOTIDE SEQUENCE [LARGE SCALE GENOMIC DNA]</scope>
    <source>
        <strain evidence="15">Berkeley</strain>
    </source>
</reference>
<reference evidence="15" key="2">
    <citation type="journal article" date="2002" name="Genome Biol.">
        <title>Annotation of the Drosophila melanogaster euchromatic genome: a systematic review.</title>
        <authorList>
            <person name="Misra S."/>
            <person name="Crosby M.A."/>
            <person name="Mungall C.J."/>
            <person name="Matthews B.B."/>
            <person name="Campbell K.S."/>
            <person name="Hradecky P."/>
            <person name="Huang Y."/>
            <person name="Kaminker J.S."/>
            <person name="Millburn G.H."/>
            <person name="Prochnik S.E."/>
            <person name="Smith C.D."/>
            <person name="Tupy J.L."/>
            <person name="Whitfield E.J."/>
            <person name="Bayraktaroglu L."/>
            <person name="Berman B.P."/>
            <person name="Bettencourt B.R."/>
            <person name="Celniker S.E."/>
            <person name="de Grey A.D.N.J."/>
            <person name="Drysdale R.A."/>
            <person name="Harris N.L."/>
            <person name="Richter J."/>
            <person name="Russo S."/>
            <person name="Schroeder A.J."/>
            <person name="Shu S.Q."/>
            <person name="Stapleton M."/>
            <person name="Yamada C."/>
            <person name="Ashburner M."/>
            <person name="Gelbart W.M."/>
            <person name="Rubin G.M."/>
            <person name="Lewis S.E."/>
        </authorList>
    </citation>
    <scope>GENOME REANNOTATION</scope>
    <source>
        <strain evidence="15">Berkeley</strain>
    </source>
</reference>
<reference evidence="12" key="3">
    <citation type="submission" date="2007-11" db="EMBL/GenBank/DDBJ databases">
        <authorList>
            <person name="Stapleton M."/>
            <person name="Carlson J."/>
            <person name="Frise E."/>
            <person name="Kapadia B."/>
            <person name="Park S."/>
            <person name="Wan K."/>
            <person name="Yu C."/>
            <person name="Celniker S."/>
        </authorList>
    </citation>
    <scope>NUCLEOTIDE SEQUENCE [LARGE SCALE MRNA]</scope>
    <source>
        <strain evidence="12">Berkeley</strain>
        <tissue evidence="12">Larva</tissue>
        <tissue evidence="12">Pupae</tissue>
    </source>
</reference>
<reference evidence="13" key="4">
    <citation type="submission" date="2008-12" db="EMBL/GenBank/DDBJ databases">
        <authorList>
            <person name="Carlson J."/>
            <person name="Booth B."/>
            <person name="Frise E."/>
            <person name="Park S."/>
            <person name="Wan K."/>
            <person name="Yu C."/>
            <person name="Celniker S."/>
        </authorList>
    </citation>
    <scope>NUCLEOTIDE SEQUENCE [LARGE SCALE MRNA]</scope>
    <source>
        <strain evidence="13">Berkeley</strain>
        <tissue evidence="13">Embryo</tissue>
    </source>
</reference>
<reference evidence="11" key="5">
    <citation type="journal article" date="2018" name="PLoS Genet.">
        <title>Dissection of Nidogen function in Drosophila reveals tissue-specific mechanisms of basement membrane assembly.</title>
        <authorList>
            <person name="Dai J."/>
            <person name="Estrada B."/>
            <person name="Jacobs S."/>
            <person name="Sanchez-Sanchez B.J."/>
            <person name="Tang J."/>
            <person name="Ma M."/>
            <person name="Magadan-Corpas P."/>
            <person name="Pastor-Pareja J.C."/>
            <person name="Martin-Bermudo M.D."/>
        </authorList>
    </citation>
    <scope>FUNCTION</scope>
    <scope>SUBCELLULAR LOCATION</scope>
    <scope>DEVELOPMENTAL STAGE</scope>
    <scope>TISSUE SPECIFICITY</scope>
    <scope>DISRUPTION PHENOTYPE</scope>
</reference>
<reference evidence="11" key="6">
    <citation type="journal article" date="2019" name="Development">
        <title>Characterization of Drosophila Nidogen/entactin reveals roles in basement membrane stability, barrier function and nervous system patterning.</title>
        <authorList>
            <person name="Wolfstetter G."/>
            <person name="Dahlitz I."/>
            <person name="Pfeifer K."/>
            <person name="Toepfer U."/>
            <person name="Alt J.A."/>
            <person name="Pfeifer D.C."/>
            <person name="Lakes-Harlan R."/>
            <person name="Baumgartner S."/>
            <person name="Palmer R.H."/>
            <person name="Holz A."/>
        </authorList>
    </citation>
    <scope>FUNCTION</scope>
    <scope>SUBCELLULAR LOCATION</scope>
    <scope>DEVELOPMENTAL STAGE</scope>
    <scope>DOMAIN</scope>
    <scope>DISRUPTION PHENOTYPE</scope>
</reference>
<feature type="signal peptide" evidence="1">
    <location>
        <begin position="1"/>
        <end position="22"/>
    </location>
</feature>
<feature type="chain" id="PRO_5015085945" description="Nidogen" evidence="1">
    <location>
        <begin position="23"/>
        <end position="1350"/>
    </location>
</feature>
<feature type="domain" description="NIDO" evidence="6">
    <location>
        <begin position="107"/>
        <end position="260"/>
    </location>
</feature>
<feature type="domain" description="EGF-like 1" evidence="2">
    <location>
        <begin position="281"/>
        <end position="321"/>
    </location>
</feature>
<feature type="domain" description="Nidogen G2 beta-barrel" evidence="3">
    <location>
        <begin position="325"/>
        <end position="550"/>
    </location>
</feature>
<feature type="domain" description="EGF-like 2" evidence="2">
    <location>
        <begin position="545"/>
        <end position="583"/>
    </location>
</feature>
<feature type="domain" description="EGF-like 3; calcium-binding" evidence="2">
    <location>
        <begin position="591"/>
        <end position="631"/>
    </location>
</feature>
<feature type="domain" description="EGF-like 4" evidence="2">
    <location>
        <begin position="788"/>
        <end position="829"/>
    </location>
</feature>
<feature type="domain" description="EGF-like 5" evidence="2">
    <location>
        <begin position="832"/>
        <end position="874"/>
    </location>
</feature>
<feature type="domain" description="EGF-like 6" evidence="2">
    <location>
        <begin position="912"/>
        <end position="953"/>
    </location>
</feature>
<feature type="domain" description="EGF-like 7" evidence="2">
    <location>
        <begin position="955"/>
        <end position="996"/>
    </location>
</feature>
<feature type="domain" description="EGF-like 8" evidence="2">
    <location>
        <begin position="997"/>
        <end position="1037"/>
    </location>
</feature>
<feature type="repeat" description="LDL-receptor class B 1" evidence="4">
    <location>
        <begin position="1084"/>
        <end position="1126"/>
    </location>
</feature>
<feature type="repeat" description="LDL-receptor class B 2" evidence="4">
    <location>
        <begin position="1127"/>
        <end position="1170"/>
    </location>
</feature>
<feature type="repeat" description="LDL-receptor class B 3" evidence="4">
    <location>
        <begin position="1171"/>
        <end position="1216"/>
    </location>
</feature>
<feature type="repeat" description="LDL-receptor class B 4" evidence="4">
    <location>
        <begin position="1257"/>
        <end position="1282"/>
    </location>
</feature>
<feature type="region of interest" description="Disordered" evidence="7">
    <location>
        <begin position="645"/>
        <end position="691"/>
    </location>
</feature>
<feature type="glycosylation site" description="N-linked (GlcNAc...) asparagine" evidence="5">
    <location>
        <position position="231"/>
    </location>
</feature>
<feature type="glycosylation site" description="N-linked (GlcNAc...) asparagine" evidence="5">
    <location>
        <position position="423"/>
    </location>
</feature>
<feature type="glycosylation site" description="N-linked (GlcNAc...) asparagine" evidence="5">
    <location>
        <position position="480"/>
    </location>
</feature>
<feature type="glycosylation site" description="N-linked (GlcNAc...) asparagine" evidence="5">
    <location>
        <position position="633"/>
    </location>
</feature>
<feature type="glycosylation site" description="N-linked (GlcNAc...) asparagine" evidence="5">
    <location>
        <position position="801"/>
    </location>
</feature>
<feature type="glycosylation site" description="N-linked (GlcNAc...) asparagine" evidence="5">
    <location>
        <position position="1032"/>
    </location>
</feature>
<feature type="disulfide bond" evidence="2">
    <location>
        <begin position="285"/>
        <end position="298"/>
    </location>
</feature>
<feature type="disulfide bond" evidence="2">
    <location>
        <begin position="292"/>
        <end position="307"/>
    </location>
</feature>
<feature type="disulfide bond" evidence="2">
    <location>
        <begin position="309"/>
        <end position="320"/>
    </location>
</feature>
<feature type="disulfide bond" evidence="2">
    <location>
        <begin position="549"/>
        <end position="562"/>
    </location>
</feature>
<feature type="disulfide bond" evidence="2">
    <location>
        <begin position="556"/>
        <end position="571"/>
    </location>
</feature>
<feature type="disulfide bond" evidence="2">
    <location>
        <begin position="595"/>
        <end position="608"/>
    </location>
</feature>
<feature type="disulfide bond" evidence="2">
    <location>
        <begin position="602"/>
        <end position="617"/>
    </location>
</feature>
<feature type="disulfide bond" evidence="2">
    <location>
        <begin position="619"/>
        <end position="630"/>
    </location>
</feature>
<feature type="disulfide bond" evidence="2">
    <location>
        <begin position="792"/>
        <end position="804"/>
    </location>
</feature>
<feature type="disulfide bond" evidence="2">
    <location>
        <begin position="798"/>
        <end position="815"/>
    </location>
</feature>
<feature type="disulfide bond" evidence="2">
    <location>
        <begin position="817"/>
        <end position="828"/>
    </location>
</feature>
<feature type="disulfide bond" evidence="2">
    <location>
        <begin position="836"/>
        <end position="849"/>
    </location>
</feature>
<feature type="disulfide bond" evidence="2">
    <location>
        <begin position="843"/>
        <end position="860"/>
    </location>
</feature>
<feature type="disulfide bond" evidence="2">
    <location>
        <begin position="862"/>
        <end position="873"/>
    </location>
</feature>
<feature type="disulfide bond" evidence="2">
    <location>
        <begin position="916"/>
        <end position="927"/>
    </location>
</feature>
<feature type="disulfide bond" evidence="2">
    <location>
        <begin position="921"/>
        <end position="938"/>
    </location>
</feature>
<feature type="disulfide bond" evidence="2">
    <location>
        <begin position="940"/>
        <end position="952"/>
    </location>
</feature>
<feature type="disulfide bond" evidence="2">
    <location>
        <begin position="959"/>
        <end position="971"/>
    </location>
</feature>
<feature type="disulfide bond" evidence="2">
    <location>
        <begin position="965"/>
        <end position="982"/>
    </location>
</feature>
<feature type="disulfide bond" evidence="2">
    <location>
        <begin position="984"/>
        <end position="995"/>
    </location>
</feature>
<feature type="disulfide bond" evidence="2">
    <location>
        <begin position="1001"/>
        <end position="1014"/>
    </location>
</feature>
<feature type="disulfide bond" evidence="2">
    <location>
        <begin position="1008"/>
        <end position="1023"/>
    </location>
</feature>
<feature type="disulfide bond" evidence="2">
    <location>
        <begin position="1025"/>
        <end position="1036"/>
    </location>
</feature>
<feature type="sequence conflict" description="In Ref. 4; ACK77669." evidence="11" ref="4">
    <original>N</original>
    <variation>S</variation>
    <location>
        <position position="979"/>
    </location>
</feature>
<comment type="function">
    <text evidence="8 9">Cell adhesion glycoprotein which is widely distributed in basement membranes (PubMed:30260959, PubMed:30567930). Involved in cell-extracellular matrix (ECM) interactions probably by connecting the laminin and collagen IV networks (PubMed:30260959, PubMed:30567930). Required for permeability and mechanical stability of basement membranes, and ECM dependent neural plasticity (PubMed:30567930). Not involved in assembly of the embryonic basement membrane (PubMed:30567930).</text>
</comment>
<comment type="subcellular location">
    <subcellularLocation>
        <location evidence="8">Secreted</location>
    </subcellularLocation>
    <subcellularLocation>
        <location evidence="8 9">Secreted</location>
        <location evidence="8 9">Extracellular space</location>
        <location evidence="8 9">Extracellular matrix</location>
        <location evidence="8 9">Basement membrane</location>
    </subcellularLocation>
    <text evidence="8 9">Secreted in the hemolymph (PubMed:30260959). Localization to the basal membranes depends on laminin (PubMed:30260959, PubMed:30567930).</text>
</comment>
<comment type="tissue specificity">
    <text evidence="8">Expressed in the basement membrane around the follicular epithelium of the adult ovary (at protein level).</text>
</comment>
<comment type="developmental stage">
    <text evidence="8 9">Expressed in different patterns throughout embryogenesis (at protein levels) (PubMed:30260959, PubMed:30567930). At stage 11/12, embeds dorsal median cells and somatic myoblasts forming a thin layer between the ectoderm and the mesoderm and around the prospective anal plate (PubMed:30567930). At stage 12, after germ band retraction, accumulates in the forming basal membranes around the developing brain and ventral nerve cord, in the differentiating tracheal system, in the future digestive tract as well as in the forming somatic muscles (PubMed:30567930). At stage 13, accumulates around caudal visceral mesodermal cells (PubMed:30260959). At stage 16, expressed in the basal membrane surrounding most tissues, including muscles, gut and larval ventral nerve cord, brain, and in chordotonal organs (at protein level) (PubMed:30260959, PubMed:30567930). Expressed in embryonic macrophages (at protein level) (PubMed:30260959). In the larva, expressed mainly by fat body adipocytes and blood cells in the basal membranes that surround the fat body, imaginal disks, tracheae, salivary glands, midgut, mature muscles and heart (at protein level) (PubMed:30260959). Expressed during embryogenesis: at stage 11/12 detected in single cells of the head, especially in the gnathal segments as well as in segmentally located patches of cells in the dorsal mesoderm, detected in the midline-associated, mesodermal dorsal median cells and somatic myoblasts (PubMed:30567930). Only low expression in the amnioserosa (PubMed:30567930). After germ band retraction (stage 12), expressed in the forming dorsal and ventral muscles, the amnioserosa and the segmentally located chordotonal organs (PubMed:30567930). Expressed in the esophageal visceral muscle primordium and in the joint region between hind- and midgut (PubMed:30567930). At stage 16, expressed in somatic and visceral muscles, and in the cap cells of the chordotonal organs (PubMed:30567930).</text>
</comment>
<comment type="domain">
    <text evidence="8">The NIDO domain (also known as globular region 1 or G1) contributes to the localization to the basal membrane probably by binding to vkg.</text>
</comment>
<comment type="domain">
    <text evidence="8">The EGF-like 1 and nidogen G2 beta-barrel domain (also known as globular region 2 or G2) contribute to the localization to the basal membrane probably by binding to vkg.</text>
</comment>
<comment type="domain">
    <text evidence="8">The EGF-like 2-8 domains (also known as the ROD domain) is necessary but not sufficient for localization to the basal membrane.</text>
</comment>
<comment type="domain">
    <text evidence="8">The LDL-receptor class B 1-4 domains (also known as globular region 3 or G3) is necessary for cell-extracellular matrix (ECM) interactions. Also, contributes to the localization to the basal membrane probably by binding to laminins.</text>
</comment>
<comment type="disruption phenotype">
    <text evidence="8 9">Reduces fertility (PubMed:30260959, PubMed:30567930). In larvae results in impaired climbing abilities and in multiple holes in the basal membrane surrounding the fat body adipose, the somatic muscles and the longitudinal and circular visceral muscles, affecting permeability and mechanical stability of the basement membrane (PubMed:30260959, PubMed:30567930). Impairs larvae movement including reduced crawling speed, smaller stride frequency and exploration area together with sudden motion defects in their crawling pattern, such as head shaking, and spontaneous rolling and bending (PubMed:30567930). Increases neuromuscular junction (NMJ) size including abnormal branching numbers, overall branch length and enhanced bouton density suggesting defective NMJ maturation (PubMed:30567930). Reduces reaction to vibrational stimuli with partial loss of alignment of sensory cilia and morphological defects of the larval peripheral nervous system (PubMed:30567930). Results in smaller pupae presenting an orientation shift of the pupal cases towards the horizontal axis (PubMed:30567930). Results in incompletely inflated wing blades in a small group of adults (PubMed:30567930).</text>
</comment>
<protein>
    <recommendedName>
        <fullName evidence="10 14">Nidogen</fullName>
    </recommendedName>
    <alternativeName>
        <fullName evidence="10 14">Entactin</fullName>
    </alternativeName>
</protein>
<dbReference type="EMBL" id="AE013599">
    <property type="protein sequence ID" value="AAF58809.3"/>
    <property type="molecule type" value="Genomic_DNA"/>
</dbReference>
<dbReference type="EMBL" id="AE013599">
    <property type="protein sequence ID" value="AAS64880.2"/>
    <property type="molecule type" value="Genomic_DNA"/>
</dbReference>
<dbReference type="EMBL" id="BT031149">
    <property type="protein sequence ID" value="ABX00771.1"/>
    <property type="molecule type" value="mRNA"/>
</dbReference>
<dbReference type="EMBL" id="BT053751">
    <property type="protein sequence ID" value="ACK77669.1"/>
    <property type="molecule type" value="mRNA"/>
</dbReference>
<dbReference type="RefSeq" id="NP_610575.1">
    <property type="nucleotide sequence ID" value="NM_136731.2"/>
</dbReference>
<dbReference type="RefSeq" id="NP_995796.2">
    <property type="nucleotide sequence ID" value="NM_206074.2"/>
</dbReference>
<dbReference type="SMR" id="A1Z877"/>
<dbReference type="FunCoup" id="A1Z877">
    <property type="interactions" value="40"/>
</dbReference>
<dbReference type="IntAct" id="A1Z877">
    <property type="interactions" value="2"/>
</dbReference>
<dbReference type="STRING" id="7227.FBpp0308545"/>
<dbReference type="GlyCosmos" id="A1Z877">
    <property type="glycosylation" value="6 sites, No reported glycans"/>
</dbReference>
<dbReference type="GlyGen" id="A1Z877">
    <property type="glycosylation" value="8 sites, 1 O-linked glycan (2 sites)"/>
</dbReference>
<dbReference type="PaxDb" id="7227-FBpp0087439"/>
<dbReference type="DNASU" id="36089"/>
<dbReference type="EnsemblMetazoa" id="FBtr0088349">
    <property type="protein sequence ID" value="FBpp0087438"/>
    <property type="gene ID" value="FBgn0026403"/>
</dbReference>
<dbReference type="EnsemblMetazoa" id="FBtr0339459">
    <property type="protein sequence ID" value="FBpp0308545"/>
    <property type="gene ID" value="FBgn0026403"/>
</dbReference>
<dbReference type="GeneID" id="36089"/>
<dbReference type="KEGG" id="dme:Dmel_CG12908"/>
<dbReference type="UCSC" id="CG12908-RA">
    <property type="organism name" value="d. melanogaster"/>
</dbReference>
<dbReference type="UCSC" id="CG12908-RB">
    <property type="organism name" value="d. melanogaster"/>
</dbReference>
<dbReference type="AGR" id="FB:FBgn0026403"/>
<dbReference type="CTD" id="36089"/>
<dbReference type="FlyBase" id="FBgn0026403">
    <property type="gene designation" value="Ndg"/>
</dbReference>
<dbReference type="VEuPathDB" id="VectorBase:FBgn0026403"/>
<dbReference type="eggNOG" id="KOG1214">
    <property type="taxonomic scope" value="Eukaryota"/>
</dbReference>
<dbReference type="GeneTree" id="ENSGT00940000170029"/>
<dbReference type="HOGENOM" id="CLU_003163_0_0_1"/>
<dbReference type="InParanoid" id="A1Z877"/>
<dbReference type="OMA" id="PGTGNQF"/>
<dbReference type="OrthoDB" id="6375837at2759"/>
<dbReference type="PhylomeDB" id="A1Z877"/>
<dbReference type="SignaLink" id="A1Z877"/>
<dbReference type="BioGRID-ORCS" id="36089">
    <property type="hits" value="0 hits in 3 CRISPR screens"/>
</dbReference>
<dbReference type="GenomeRNAi" id="36089"/>
<dbReference type="PRO" id="PR:A1Z877"/>
<dbReference type="Proteomes" id="UP000000803">
    <property type="component" value="Chromosome 2R"/>
</dbReference>
<dbReference type="Bgee" id="FBgn0026403">
    <property type="expression patterns" value="Expressed in adult middle midgut class I enteroendocrine cell in adult midgut (Drosophila) and 49 other cell types or tissues"/>
</dbReference>
<dbReference type="GO" id="GO:0005604">
    <property type="term" value="C:basement membrane"/>
    <property type="evidence" value="ECO:0000314"/>
    <property type="project" value="UniProtKB"/>
</dbReference>
<dbReference type="GO" id="GO:0005615">
    <property type="term" value="C:extracellular space"/>
    <property type="evidence" value="ECO:0000318"/>
    <property type="project" value="GO_Central"/>
</dbReference>
<dbReference type="GO" id="GO:0005509">
    <property type="term" value="F:calcium ion binding"/>
    <property type="evidence" value="ECO:0007669"/>
    <property type="project" value="InterPro"/>
</dbReference>
<dbReference type="GO" id="GO:0005201">
    <property type="term" value="F:extracellular matrix structural constituent"/>
    <property type="evidence" value="ECO:0000315"/>
    <property type="project" value="FlyBase"/>
</dbReference>
<dbReference type="GO" id="GO:2001197">
    <property type="term" value="P:basement membrane assembly involved in embryonic body morphogenesis"/>
    <property type="evidence" value="ECO:0000315"/>
    <property type="project" value="UniProtKB"/>
</dbReference>
<dbReference type="GO" id="GO:0071711">
    <property type="term" value="P:basement membrane organization"/>
    <property type="evidence" value="ECO:0000315"/>
    <property type="project" value="FlyBase"/>
</dbReference>
<dbReference type="GO" id="GO:0007160">
    <property type="term" value="P:cell-matrix adhesion"/>
    <property type="evidence" value="ECO:0007669"/>
    <property type="project" value="InterPro"/>
</dbReference>
<dbReference type="GO" id="GO:0110011">
    <property type="term" value="P:regulation of basement membrane organization"/>
    <property type="evidence" value="ECO:0000315"/>
    <property type="project" value="UniProtKB"/>
</dbReference>
<dbReference type="CDD" id="cd00054">
    <property type="entry name" value="EGF_CA"/>
    <property type="match status" value="1"/>
</dbReference>
<dbReference type="CDD" id="cd00255">
    <property type="entry name" value="nidG2"/>
    <property type="match status" value="1"/>
</dbReference>
<dbReference type="FunFam" id="2.10.25.10:FF:000526">
    <property type="entry name" value="Dumpy, isoform J"/>
    <property type="match status" value="1"/>
</dbReference>
<dbReference type="FunFam" id="2.10.25.10:FF:000038">
    <property type="entry name" value="Fibrillin 2"/>
    <property type="match status" value="1"/>
</dbReference>
<dbReference type="FunFam" id="2.40.155.10:FF:000006">
    <property type="entry name" value="GD10735"/>
    <property type="match status" value="1"/>
</dbReference>
<dbReference type="FunFam" id="2.10.25.10:FF:001047">
    <property type="entry name" value="GM21210"/>
    <property type="match status" value="1"/>
</dbReference>
<dbReference type="FunFam" id="2.120.10.30:FF:000241">
    <property type="entry name" value="Low-density lipoprotein receptor-related protein 6"/>
    <property type="match status" value="1"/>
</dbReference>
<dbReference type="Gene3D" id="2.40.155.10">
    <property type="entry name" value="Green fluorescent protein"/>
    <property type="match status" value="1"/>
</dbReference>
<dbReference type="Gene3D" id="2.10.25.10">
    <property type="entry name" value="Laminin"/>
    <property type="match status" value="6"/>
</dbReference>
<dbReference type="Gene3D" id="2.120.10.30">
    <property type="entry name" value="TolB, C-terminal domain"/>
    <property type="match status" value="1"/>
</dbReference>
<dbReference type="InterPro" id="IPR011042">
    <property type="entry name" value="6-blade_b-propeller_TolB-like"/>
</dbReference>
<dbReference type="InterPro" id="IPR050778">
    <property type="entry name" value="Cueball_EGF_LRP_Nidogen"/>
</dbReference>
<dbReference type="InterPro" id="IPR001881">
    <property type="entry name" value="EGF-like_Ca-bd_dom"/>
</dbReference>
<dbReference type="InterPro" id="IPR000742">
    <property type="entry name" value="EGF-like_dom"/>
</dbReference>
<dbReference type="InterPro" id="IPR000152">
    <property type="entry name" value="EGF-type_Asp/Asn_hydroxyl_site"/>
</dbReference>
<dbReference type="InterPro" id="IPR018097">
    <property type="entry name" value="EGF_Ca-bd_CS"/>
</dbReference>
<dbReference type="InterPro" id="IPR024731">
    <property type="entry name" value="EGF_dom"/>
</dbReference>
<dbReference type="InterPro" id="IPR006605">
    <property type="entry name" value="G2_nidogen/fibulin_G2F"/>
</dbReference>
<dbReference type="InterPro" id="IPR009017">
    <property type="entry name" value="GFP"/>
</dbReference>
<dbReference type="InterPro" id="IPR009030">
    <property type="entry name" value="Growth_fac_rcpt_cys_sf"/>
</dbReference>
<dbReference type="InterPro" id="IPR000033">
    <property type="entry name" value="LDLR_classB_rpt"/>
</dbReference>
<dbReference type="InterPro" id="IPR003886">
    <property type="entry name" value="NIDO_dom"/>
</dbReference>
<dbReference type="InterPro" id="IPR049883">
    <property type="entry name" value="NOTCH1_EGF-like"/>
</dbReference>
<dbReference type="PANTHER" id="PTHR46513:SF13">
    <property type="entry name" value="EGF-LIKE DOMAIN-CONTAINING PROTEIN"/>
    <property type="match status" value="1"/>
</dbReference>
<dbReference type="PANTHER" id="PTHR46513">
    <property type="entry name" value="VITELLOGENIN RECEPTOR-LIKE PROTEIN-RELATED-RELATED"/>
    <property type="match status" value="1"/>
</dbReference>
<dbReference type="Pfam" id="PF12947">
    <property type="entry name" value="EGF_3"/>
    <property type="match status" value="3"/>
</dbReference>
<dbReference type="Pfam" id="PF07645">
    <property type="entry name" value="EGF_CA"/>
    <property type="match status" value="1"/>
</dbReference>
<dbReference type="Pfam" id="PF07474">
    <property type="entry name" value="G2F"/>
    <property type="match status" value="1"/>
</dbReference>
<dbReference type="Pfam" id="PF00058">
    <property type="entry name" value="Ldl_recept_b"/>
    <property type="match status" value="2"/>
</dbReference>
<dbReference type="Pfam" id="PF06119">
    <property type="entry name" value="NIDO"/>
    <property type="match status" value="1"/>
</dbReference>
<dbReference type="SMART" id="SM00181">
    <property type="entry name" value="EGF"/>
    <property type="match status" value="11"/>
</dbReference>
<dbReference type="SMART" id="SM00179">
    <property type="entry name" value="EGF_CA"/>
    <property type="match status" value="2"/>
</dbReference>
<dbReference type="SMART" id="SM00682">
    <property type="entry name" value="G2F"/>
    <property type="match status" value="1"/>
</dbReference>
<dbReference type="SMART" id="SM00135">
    <property type="entry name" value="LY"/>
    <property type="match status" value="5"/>
</dbReference>
<dbReference type="SMART" id="SM00539">
    <property type="entry name" value="NIDO"/>
    <property type="match status" value="1"/>
</dbReference>
<dbReference type="SUPFAM" id="SSF57196">
    <property type="entry name" value="EGF/Laminin"/>
    <property type="match status" value="1"/>
</dbReference>
<dbReference type="SUPFAM" id="SSF54511">
    <property type="entry name" value="GFP-like"/>
    <property type="match status" value="1"/>
</dbReference>
<dbReference type="SUPFAM" id="SSF57184">
    <property type="entry name" value="Growth factor receptor domain"/>
    <property type="match status" value="1"/>
</dbReference>
<dbReference type="SUPFAM" id="SSF63825">
    <property type="entry name" value="YWTD domain"/>
    <property type="match status" value="1"/>
</dbReference>
<dbReference type="PROSITE" id="PS00010">
    <property type="entry name" value="ASX_HYDROXYL"/>
    <property type="match status" value="2"/>
</dbReference>
<dbReference type="PROSITE" id="PS01186">
    <property type="entry name" value="EGF_2"/>
    <property type="match status" value="9"/>
</dbReference>
<dbReference type="PROSITE" id="PS50026">
    <property type="entry name" value="EGF_3"/>
    <property type="match status" value="8"/>
</dbReference>
<dbReference type="PROSITE" id="PS01187">
    <property type="entry name" value="EGF_CA"/>
    <property type="match status" value="1"/>
</dbReference>
<dbReference type="PROSITE" id="PS51120">
    <property type="entry name" value="LDLRB"/>
    <property type="match status" value="4"/>
</dbReference>
<dbReference type="PROSITE" id="PS51220">
    <property type="entry name" value="NIDO"/>
    <property type="match status" value="1"/>
</dbReference>
<dbReference type="PROSITE" id="PS50993">
    <property type="entry name" value="NIDOGEN_G2"/>
    <property type="match status" value="1"/>
</dbReference>
<gene>
    <name evidence="10 14" type="primary">Ndg</name>
    <name evidence="14" type="ORF">CG12908</name>
</gene>
<name>NDG_DROME</name>